<accession>Q741T7</accession>
<proteinExistence type="inferred from homology"/>
<feature type="chain" id="PRO_0000166508" description="Potassium-transporting ATPase potassium-binding subunit">
    <location>
        <begin position="1"/>
        <end position="556"/>
    </location>
</feature>
<feature type="transmembrane region" description="Helical" evidence="1">
    <location>
        <begin position="6"/>
        <end position="26"/>
    </location>
</feature>
<feature type="transmembrane region" description="Helical" evidence="1">
    <location>
        <begin position="65"/>
        <end position="85"/>
    </location>
</feature>
<feature type="transmembrane region" description="Helical" evidence="1">
    <location>
        <begin position="133"/>
        <end position="153"/>
    </location>
</feature>
<feature type="transmembrane region" description="Helical" evidence="1">
    <location>
        <begin position="176"/>
        <end position="196"/>
    </location>
</feature>
<feature type="transmembrane region" description="Helical" evidence="1">
    <location>
        <begin position="249"/>
        <end position="269"/>
    </location>
</feature>
<feature type="transmembrane region" description="Helical" evidence="1">
    <location>
        <begin position="283"/>
        <end position="303"/>
    </location>
</feature>
<feature type="transmembrane region" description="Helical" evidence="1">
    <location>
        <begin position="378"/>
        <end position="398"/>
    </location>
</feature>
<feature type="transmembrane region" description="Helical" evidence="1">
    <location>
        <begin position="419"/>
        <end position="439"/>
    </location>
</feature>
<feature type="transmembrane region" description="Helical" evidence="1">
    <location>
        <begin position="483"/>
        <end position="503"/>
    </location>
</feature>
<feature type="transmembrane region" description="Helical" evidence="1">
    <location>
        <begin position="526"/>
        <end position="546"/>
    </location>
</feature>
<reference key="1">
    <citation type="journal article" date="2005" name="Proc. Natl. Acad. Sci. U.S.A.">
        <title>The complete genome sequence of Mycobacterium avium subspecies paratuberculosis.</title>
        <authorList>
            <person name="Li L."/>
            <person name="Bannantine J.P."/>
            <person name="Zhang Q."/>
            <person name="Amonsin A."/>
            <person name="May B.J."/>
            <person name="Alt D."/>
            <person name="Banerji N."/>
            <person name="Kanjilal S."/>
            <person name="Kapur V."/>
        </authorList>
    </citation>
    <scope>NUCLEOTIDE SEQUENCE [LARGE SCALE GENOMIC DNA]</scope>
    <source>
        <strain>ATCC BAA-968 / K-10</strain>
    </source>
</reference>
<name>KDPA_MYCPA</name>
<comment type="function">
    <text evidence="1">Part of the high-affinity ATP-driven potassium transport (or Kdp) system, which catalyzes the hydrolysis of ATP coupled with the electrogenic transport of potassium into the cytoplasm. This subunit binds the extracellular potassium ions and delivers the ions to the membrane domain of KdpB through an intramembrane tunnel.</text>
</comment>
<comment type="subunit">
    <text evidence="1">The system is composed of three essential subunits: KdpA, KdpB and KdpC.</text>
</comment>
<comment type="subcellular location">
    <subcellularLocation>
        <location evidence="1">Cell membrane</location>
        <topology evidence="1">Multi-pass membrane protein</topology>
    </subcellularLocation>
</comment>
<comment type="similarity">
    <text evidence="1">Belongs to the KdpA family.</text>
</comment>
<gene>
    <name evidence="1" type="primary">kdpA</name>
    <name type="ordered locus">MAP_1000c</name>
</gene>
<keyword id="KW-1003">Cell membrane</keyword>
<keyword id="KW-0406">Ion transport</keyword>
<keyword id="KW-0472">Membrane</keyword>
<keyword id="KW-0630">Potassium</keyword>
<keyword id="KW-0633">Potassium transport</keyword>
<keyword id="KW-1185">Reference proteome</keyword>
<keyword id="KW-0812">Transmembrane</keyword>
<keyword id="KW-1133">Transmembrane helix</keyword>
<keyword id="KW-0813">Transport</keyword>
<evidence type="ECO:0000255" key="1">
    <source>
        <dbReference type="HAMAP-Rule" id="MF_00275"/>
    </source>
</evidence>
<dbReference type="EMBL" id="AE016958">
    <property type="protein sequence ID" value="AAS03317.1"/>
    <property type="molecule type" value="Genomic_DNA"/>
</dbReference>
<dbReference type="RefSeq" id="WP_003877548.1">
    <property type="nucleotide sequence ID" value="NZ_CP106873.1"/>
</dbReference>
<dbReference type="SMR" id="Q741T7"/>
<dbReference type="STRING" id="262316.MAP_1000c"/>
<dbReference type="KEGG" id="mpa:MAP_1000c"/>
<dbReference type="PATRIC" id="fig|262316.17.peg.1045"/>
<dbReference type="eggNOG" id="COG2060">
    <property type="taxonomic scope" value="Bacteria"/>
</dbReference>
<dbReference type="HOGENOM" id="CLU_018614_3_0_11"/>
<dbReference type="Proteomes" id="UP000000580">
    <property type="component" value="Chromosome"/>
</dbReference>
<dbReference type="GO" id="GO:0005886">
    <property type="term" value="C:plasma membrane"/>
    <property type="evidence" value="ECO:0007669"/>
    <property type="project" value="UniProtKB-SubCell"/>
</dbReference>
<dbReference type="GO" id="GO:0008556">
    <property type="term" value="F:P-type potassium transmembrane transporter activity"/>
    <property type="evidence" value="ECO:0007669"/>
    <property type="project" value="InterPro"/>
</dbReference>
<dbReference type="GO" id="GO:0030955">
    <property type="term" value="F:potassium ion binding"/>
    <property type="evidence" value="ECO:0007669"/>
    <property type="project" value="UniProtKB-UniRule"/>
</dbReference>
<dbReference type="HAMAP" id="MF_00275">
    <property type="entry name" value="KdpA"/>
    <property type="match status" value="1"/>
</dbReference>
<dbReference type="InterPro" id="IPR004623">
    <property type="entry name" value="KdpA"/>
</dbReference>
<dbReference type="NCBIfam" id="TIGR00680">
    <property type="entry name" value="kdpA"/>
    <property type="match status" value="1"/>
</dbReference>
<dbReference type="PANTHER" id="PTHR30607">
    <property type="entry name" value="POTASSIUM-TRANSPORTING ATPASE A CHAIN"/>
    <property type="match status" value="1"/>
</dbReference>
<dbReference type="PANTHER" id="PTHR30607:SF2">
    <property type="entry name" value="POTASSIUM-TRANSPORTING ATPASE POTASSIUM-BINDING SUBUNIT"/>
    <property type="match status" value="1"/>
</dbReference>
<dbReference type="Pfam" id="PF03814">
    <property type="entry name" value="KdpA"/>
    <property type="match status" value="1"/>
</dbReference>
<dbReference type="PIRSF" id="PIRSF001294">
    <property type="entry name" value="K_ATPaseA"/>
    <property type="match status" value="1"/>
</dbReference>
<organism>
    <name type="scientific">Mycolicibacterium paratuberculosis (strain ATCC BAA-968 / K-10)</name>
    <name type="common">Mycobacterium paratuberculosis</name>
    <dbReference type="NCBI Taxonomy" id="262316"/>
    <lineage>
        <taxon>Bacteria</taxon>
        <taxon>Bacillati</taxon>
        <taxon>Actinomycetota</taxon>
        <taxon>Actinomycetes</taxon>
        <taxon>Mycobacteriales</taxon>
        <taxon>Mycobacteriaceae</taxon>
        <taxon>Mycobacterium</taxon>
        <taxon>Mycobacterium avium complex (MAC)</taxon>
    </lineage>
</organism>
<protein>
    <recommendedName>
        <fullName evidence="1">Potassium-transporting ATPase potassium-binding subunit</fullName>
    </recommendedName>
    <alternativeName>
        <fullName evidence="1">ATP phosphohydrolase [potassium-transporting] A chain</fullName>
    </alternativeName>
    <alternativeName>
        <fullName evidence="1">Potassium-binding and translocating subunit A</fullName>
    </alternativeName>
    <alternativeName>
        <fullName evidence="1">Potassium-translocating ATPase A chain</fullName>
    </alternativeName>
</protein>
<sequence>MSSTTAGLIFLAVLVAALVAVHVPLGDYMFRVYTTDRDLATERTIYRLIGVDARSEQTWGAYARGVLAFSSVSIIFLFVLQLVQGKLPLHLHDPATKMTPSLAWNTAVSFVTNTNWQAYSGETTQGHLVQMAGLAVQNFVSAAVGMAVAVALVRGFARRRTGELGNFWVDLVRGTLRILLPISIVGAVLLVAGGAIQNFHLHDQVVTTLGGTAQTIPGGPVASQEVIKELATNGGGFYNANSAHPFENPTAWTNWLEVFLILVIGFSLPRTFGRMVGNPKQGYAIASVMASLYLLSTGFMLWFQLQHHGTVPSAVGAAMEGVEQRFGVPDSGVFAAATTLTSTGAVDSAHDSLTSLGGMITMFNMQLGEVAPGGTGSGLYGMLVLAVITVFVAGLMVGRTPEYLGKKINPREIKLAASYFLVTPLIVLTGTAIAMALPGERAGMANSGPHGLSEVLYAFTSAANNNGSAFAGLSANTEWYNTALGLAMAFGRFLPIVLVLALAGSLARQGSTPDSAGTLPTHRPQFVGMVAGVTLIVVALTFLPMLALGPLAEGIH</sequence>